<organism>
    <name type="scientific">Synechococcus sp. (strain JA-3-3Ab)</name>
    <name type="common">Cyanobacteria bacterium Yellowstone A-Prime</name>
    <dbReference type="NCBI Taxonomy" id="321327"/>
    <lineage>
        <taxon>Bacteria</taxon>
        <taxon>Bacillati</taxon>
        <taxon>Cyanobacteriota</taxon>
        <taxon>Cyanophyceae</taxon>
        <taxon>Synechococcales</taxon>
        <taxon>Synechococcaceae</taxon>
        <taxon>Synechococcus</taxon>
    </lineage>
</organism>
<evidence type="ECO:0000250" key="1"/>
<evidence type="ECO:0000255" key="2">
    <source>
        <dbReference type="HAMAP-Rule" id="MF_01631"/>
    </source>
</evidence>
<evidence type="ECO:0000256" key="3">
    <source>
        <dbReference type="SAM" id="MobiDB-lite"/>
    </source>
</evidence>
<evidence type="ECO:0000305" key="4"/>
<keyword id="KW-0012">Acyltransferase</keyword>
<keyword id="KW-0133">Cell shape</keyword>
<keyword id="KW-0961">Cell wall biogenesis/degradation</keyword>
<keyword id="KW-0963">Cytoplasm</keyword>
<keyword id="KW-0460">Magnesium</keyword>
<keyword id="KW-0479">Metal-binding</keyword>
<keyword id="KW-0511">Multifunctional enzyme</keyword>
<keyword id="KW-0548">Nucleotidyltransferase</keyword>
<keyword id="KW-0573">Peptidoglycan synthesis</keyword>
<keyword id="KW-0677">Repeat</keyword>
<keyword id="KW-0808">Transferase</keyword>
<dbReference type="EC" id="2.7.7.23" evidence="2"/>
<dbReference type="EC" id="2.3.1.157" evidence="2"/>
<dbReference type="EMBL" id="CP000239">
    <property type="protein sequence ID" value="ABC99339.1"/>
    <property type="molecule type" value="Genomic_DNA"/>
</dbReference>
<dbReference type="SMR" id="Q2JVA4"/>
<dbReference type="STRING" id="321327.CYA_1151"/>
<dbReference type="KEGG" id="cya:CYA_1151"/>
<dbReference type="eggNOG" id="COG1207">
    <property type="taxonomic scope" value="Bacteria"/>
</dbReference>
<dbReference type="HOGENOM" id="CLU_029499_15_2_3"/>
<dbReference type="OrthoDB" id="9775031at2"/>
<dbReference type="UniPathway" id="UPA00113">
    <property type="reaction ID" value="UER00532"/>
</dbReference>
<dbReference type="UniPathway" id="UPA00113">
    <property type="reaction ID" value="UER00533"/>
</dbReference>
<dbReference type="UniPathway" id="UPA00973"/>
<dbReference type="Proteomes" id="UP000008818">
    <property type="component" value="Chromosome"/>
</dbReference>
<dbReference type="GO" id="GO:0031470">
    <property type="term" value="C:carboxysome"/>
    <property type="evidence" value="ECO:0007669"/>
    <property type="project" value="UniProtKB-ARBA"/>
</dbReference>
<dbReference type="GO" id="GO:0005737">
    <property type="term" value="C:cytoplasm"/>
    <property type="evidence" value="ECO:0007669"/>
    <property type="project" value="UniProtKB-SubCell"/>
</dbReference>
<dbReference type="GO" id="GO:0016020">
    <property type="term" value="C:membrane"/>
    <property type="evidence" value="ECO:0007669"/>
    <property type="project" value="GOC"/>
</dbReference>
<dbReference type="GO" id="GO:0019134">
    <property type="term" value="F:glucosamine-1-phosphate N-acetyltransferase activity"/>
    <property type="evidence" value="ECO:0007669"/>
    <property type="project" value="UniProtKB-UniRule"/>
</dbReference>
<dbReference type="GO" id="GO:0000287">
    <property type="term" value="F:magnesium ion binding"/>
    <property type="evidence" value="ECO:0007669"/>
    <property type="project" value="UniProtKB-UniRule"/>
</dbReference>
<dbReference type="GO" id="GO:0043886">
    <property type="term" value="F:structural constituent of carboxysome shell"/>
    <property type="evidence" value="ECO:0007669"/>
    <property type="project" value="UniProtKB-ARBA"/>
</dbReference>
<dbReference type="GO" id="GO:0003977">
    <property type="term" value="F:UDP-N-acetylglucosamine diphosphorylase activity"/>
    <property type="evidence" value="ECO:0007669"/>
    <property type="project" value="UniProtKB-UniRule"/>
</dbReference>
<dbReference type="GO" id="GO:0000902">
    <property type="term" value="P:cell morphogenesis"/>
    <property type="evidence" value="ECO:0007669"/>
    <property type="project" value="UniProtKB-UniRule"/>
</dbReference>
<dbReference type="GO" id="GO:0071555">
    <property type="term" value="P:cell wall organization"/>
    <property type="evidence" value="ECO:0007669"/>
    <property type="project" value="UniProtKB-KW"/>
</dbReference>
<dbReference type="GO" id="GO:0009245">
    <property type="term" value="P:lipid A biosynthetic process"/>
    <property type="evidence" value="ECO:0007669"/>
    <property type="project" value="UniProtKB-UniRule"/>
</dbReference>
<dbReference type="GO" id="GO:0009252">
    <property type="term" value="P:peptidoglycan biosynthetic process"/>
    <property type="evidence" value="ECO:0007669"/>
    <property type="project" value="UniProtKB-UniRule"/>
</dbReference>
<dbReference type="GO" id="GO:0008360">
    <property type="term" value="P:regulation of cell shape"/>
    <property type="evidence" value="ECO:0007669"/>
    <property type="project" value="UniProtKB-KW"/>
</dbReference>
<dbReference type="GO" id="GO:0006048">
    <property type="term" value="P:UDP-N-acetylglucosamine biosynthetic process"/>
    <property type="evidence" value="ECO:0007669"/>
    <property type="project" value="UniProtKB-UniPathway"/>
</dbReference>
<dbReference type="CDD" id="cd11378">
    <property type="entry name" value="DUF296"/>
    <property type="match status" value="1"/>
</dbReference>
<dbReference type="CDD" id="cd02540">
    <property type="entry name" value="GT2_GlmU_N_bac"/>
    <property type="match status" value="1"/>
</dbReference>
<dbReference type="CDD" id="cd03353">
    <property type="entry name" value="LbH_GlmU_C"/>
    <property type="match status" value="1"/>
</dbReference>
<dbReference type="Gene3D" id="2.160.10.10">
    <property type="entry name" value="Hexapeptide repeat proteins"/>
    <property type="match status" value="1"/>
</dbReference>
<dbReference type="Gene3D" id="3.30.1330.80">
    <property type="entry name" value="Hypothetical protein, similar to alpha- acetolactate decarboxylase, domain 2"/>
    <property type="match status" value="1"/>
</dbReference>
<dbReference type="Gene3D" id="3.90.550.10">
    <property type="entry name" value="Spore Coat Polysaccharide Biosynthesis Protein SpsA, Chain A"/>
    <property type="match status" value="1"/>
</dbReference>
<dbReference type="HAMAP" id="MF_01631">
    <property type="entry name" value="GlmU"/>
    <property type="match status" value="1"/>
</dbReference>
<dbReference type="InterPro" id="IPR005882">
    <property type="entry name" value="Bifunctional_GlmU"/>
</dbReference>
<dbReference type="InterPro" id="IPR050065">
    <property type="entry name" value="GlmU-like"/>
</dbReference>
<dbReference type="InterPro" id="IPR038009">
    <property type="entry name" value="GlmU_C_LbH"/>
</dbReference>
<dbReference type="InterPro" id="IPR001451">
    <property type="entry name" value="Hexapep"/>
</dbReference>
<dbReference type="InterPro" id="IPR025877">
    <property type="entry name" value="MobA-like_NTP_Trfase"/>
</dbReference>
<dbReference type="InterPro" id="IPR029044">
    <property type="entry name" value="Nucleotide-diphossugar_trans"/>
</dbReference>
<dbReference type="InterPro" id="IPR005175">
    <property type="entry name" value="PPC_dom"/>
</dbReference>
<dbReference type="InterPro" id="IPR011004">
    <property type="entry name" value="Trimer_LpxA-like_sf"/>
</dbReference>
<dbReference type="NCBIfam" id="TIGR01173">
    <property type="entry name" value="glmU"/>
    <property type="match status" value="1"/>
</dbReference>
<dbReference type="NCBIfam" id="NF010940">
    <property type="entry name" value="PRK14360.1"/>
    <property type="match status" value="1"/>
</dbReference>
<dbReference type="PANTHER" id="PTHR43584:SF3">
    <property type="entry name" value="BIFUNCTIONAL PROTEIN GLMU"/>
    <property type="match status" value="1"/>
</dbReference>
<dbReference type="PANTHER" id="PTHR43584">
    <property type="entry name" value="NUCLEOTIDYL TRANSFERASE"/>
    <property type="match status" value="1"/>
</dbReference>
<dbReference type="Pfam" id="PF00132">
    <property type="entry name" value="Hexapep"/>
    <property type="match status" value="2"/>
</dbReference>
<dbReference type="Pfam" id="PF12804">
    <property type="entry name" value="NTP_transf_3"/>
    <property type="match status" value="1"/>
</dbReference>
<dbReference type="Pfam" id="PF03479">
    <property type="entry name" value="PCC"/>
    <property type="match status" value="1"/>
</dbReference>
<dbReference type="SUPFAM" id="SSF117856">
    <property type="entry name" value="AF0104/ALDC/Ptd012-like"/>
    <property type="match status" value="1"/>
</dbReference>
<dbReference type="SUPFAM" id="SSF53448">
    <property type="entry name" value="Nucleotide-diphospho-sugar transferases"/>
    <property type="match status" value="1"/>
</dbReference>
<dbReference type="SUPFAM" id="SSF51161">
    <property type="entry name" value="Trimeric LpxA-like enzymes"/>
    <property type="match status" value="1"/>
</dbReference>
<dbReference type="PROSITE" id="PS51742">
    <property type="entry name" value="PPC"/>
    <property type="match status" value="1"/>
</dbReference>
<proteinExistence type="inferred from homology"/>
<feature type="chain" id="PRO_0000244315" description="Bifunctional protein GlmU">
    <location>
        <begin position="1"/>
        <end position="621"/>
    </location>
</feature>
<feature type="region of interest" description="Pyrophosphorylase" evidence="1 2">
    <location>
        <begin position="1"/>
        <end position="229"/>
    </location>
</feature>
<feature type="region of interest" description="Linker" evidence="1 2">
    <location>
        <begin position="230"/>
        <end position="250"/>
    </location>
</feature>
<feature type="region of interest" description="N-acetyltransferase" evidence="1 2">
    <location>
        <begin position="251"/>
        <end position="621"/>
    </location>
</feature>
<feature type="region of interest" description="Disordered" evidence="3">
    <location>
        <begin position="601"/>
        <end position="621"/>
    </location>
</feature>
<feature type="active site" description="Proton acceptor" evidence="1 2">
    <location>
        <position position="362"/>
    </location>
</feature>
<feature type="binding site" evidence="1 2">
    <location>
        <begin position="11"/>
        <end position="14"/>
    </location>
    <ligand>
        <name>UDP-N-acetyl-alpha-D-glucosamine</name>
        <dbReference type="ChEBI" id="CHEBI:57705"/>
    </ligand>
</feature>
<feature type="binding site" evidence="1 2">
    <location>
        <position position="25"/>
    </location>
    <ligand>
        <name>UDP-N-acetyl-alpha-D-glucosamine</name>
        <dbReference type="ChEBI" id="CHEBI:57705"/>
    </ligand>
</feature>
<feature type="binding site" evidence="1 2">
    <location>
        <position position="76"/>
    </location>
    <ligand>
        <name>UDP-N-acetyl-alpha-D-glucosamine</name>
        <dbReference type="ChEBI" id="CHEBI:57705"/>
    </ligand>
</feature>
<feature type="binding site" evidence="1 2">
    <location>
        <begin position="81"/>
        <end position="82"/>
    </location>
    <ligand>
        <name>UDP-N-acetyl-alpha-D-glucosamine</name>
        <dbReference type="ChEBI" id="CHEBI:57705"/>
    </ligand>
</feature>
<feature type="binding site" evidence="1 2">
    <location>
        <position position="106"/>
    </location>
    <ligand>
        <name>Mg(2+)</name>
        <dbReference type="ChEBI" id="CHEBI:18420"/>
    </ligand>
</feature>
<feature type="binding site" evidence="1 2">
    <location>
        <position position="143"/>
    </location>
    <ligand>
        <name>UDP-N-acetyl-alpha-D-glucosamine</name>
        <dbReference type="ChEBI" id="CHEBI:57705"/>
    </ligand>
</feature>
<feature type="binding site" evidence="1 2">
    <location>
        <position position="158"/>
    </location>
    <ligand>
        <name>UDP-N-acetyl-alpha-D-glucosamine</name>
        <dbReference type="ChEBI" id="CHEBI:57705"/>
    </ligand>
</feature>
<feature type="binding site" evidence="1 2">
    <location>
        <position position="173"/>
    </location>
    <ligand>
        <name>UDP-N-acetyl-alpha-D-glucosamine</name>
        <dbReference type="ChEBI" id="CHEBI:57705"/>
    </ligand>
</feature>
<feature type="binding site" evidence="1 2">
    <location>
        <position position="227"/>
    </location>
    <ligand>
        <name>Mg(2+)</name>
        <dbReference type="ChEBI" id="CHEBI:18420"/>
    </ligand>
</feature>
<feature type="binding site" evidence="1 2">
    <location>
        <position position="227"/>
    </location>
    <ligand>
        <name>UDP-N-acetyl-alpha-D-glucosamine</name>
        <dbReference type="ChEBI" id="CHEBI:57705"/>
    </ligand>
</feature>
<feature type="binding site" evidence="2">
    <location>
        <position position="332"/>
    </location>
    <ligand>
        <name>UDP-N-acetyl-alpha-D-glucosamine</name>
        <dbReference type="ChEBI" id="CHEBI:57705"/>
    </ligand>
</feature>
<feature type="binding site" evidence="2">
    <location>
        <position position="350"/>
    </location>
    <ligand>
        <name>UDP-N-acetyl-alpha-D-glucosamine</name>
        <dbReference type="ChEBI" id="CHEBI:57705"/>
    </ligand>
</feature>
<feature type="binding site" evidence="2">
    <location>
        <position position="365"/>
    </location>
    <ligand>
        <name>UDP-N-acetyl-alpha-D-glucosamine</name>
        <dbReference type="ChEBI" id="CHEBI:57705"/>
    </ligand>
</feature>
<feature type="binding site" evidence="2">
    <location>
        <position position="376"/>
    </location>
    <ligand>
        <name>UDP-N-acetyl-alpha-D-glucosamine</name>
        <dbReference type="ChEBI" id="CHEBI:57705"/>
    </ligand>
</feature>
<feature type="binding site" evidence="2">
    <location>
        <position position="379"/>
    </location>
    <ligand>
        <name>acetyl-CoA</name>
        <dbReference type="ChEBI" id="CHEBI:57288"/>
    </ligand>
</feature>
<feature type="binding site" evidence="1 2">
    <location>
        <begin position="385"/>
        <end position="386"/>
    </location>
    <ligand>
        <name>acetyl-CoA</name>
        <dbReference type="ChEBI" id="CHEBI:57288"/>
    </ligand>
</feature>
<feature type="binding site" evidence="1 2">
    <location>
        <position position="422"/>
    </location>
    <ligand>
        <name>acetyl-CoA</name>
        <dbReference type="ChEBI" id="CHEBI:57288"/>
    </ligand>
</feature>
<feature type="binding site" evidence="1 2">
    <location>
        <position position="441"/>
    </location>
    <ligand>
        <name>acetyl-CoA</name>
        <dbReference type="ChEBI" id="CHEBI:57288"/>
    </ligand>
</feature>
<comment type="function">
    <text evidence="2">Catalyzes the last two sequential reactions in the de novo biosynthetic pathway for UDP-N-acetylglucosamine (UDP-GlcNAc). The C-terminal domain catalyzes the transfer of acetyl group from acetyl coenzyme A to glucosamine-1-phosphate (GlcN-1-P) to produce N-acetylglucosamine-1-phosphate (GlcNAc-1-P), which is converted into UDP-GlcNAc by the transfer of uridine 5-monophosphate (from uridine 5-triphosphate), a reaction catalyzed by the N-terminal domain.</text>
</comment>
<comment type="catalytic activity">
    <reaction evidence="2">
        <text>alpha-D-glucosamine 1-phosphate + acetyl-CoA = N-acetyl-alpha-D-glucosamine 1-phosphate + CoA + H(+)</text>
        <dbReference type="Rhea" id="RHEA:13725"/>
        <dbReference type="ChEBI" id="CHEBI:15378"/>
        <dbReference type="ChEBI" id="CHEBI:57287"/>
        <dbReference type="ChEBI" id="CHEBI:57288"/>
        <dbReference type="ChEBI" id="CHEBI:57776"/>
        <dbReference type="ChEBI" id="CHEBI:58516"/>
        <dbReference type="EC" id="2.3.1.157"/>
    </reaction>
</comment>
<comment type="catalytic activity">
    <reaction evidence="2">
        <text>N-acetyl-alpha-D-glucosamine 1-phosphate + UTP + H(+) = UDP-N-acetyl-alpha-D-glucosamine + diphosphate</text>
        <dbReference type="Rhea" id="RHEA:13509"/>
        <dbReference type="ChEBI" id="CHEBI:15378"/>
        <dbReference type="ChEBI" id="CHEBI:33019"/>
        <dbReference type="ChEBI" id="CHEBI:46398"/>
        <dbReference type="ChEBI" id="CHEBI:57705"/>
        <dbReference type="ChEBI" id="CHEBI:57776"/>
        <dbReference type="EC" id="2.7.7.23"/>
    </reaction>
</comment>
<comment type="cofactor">
    <cofactor evidence="1 2">
        <name>Mg(2+)</name>
        <dbReference type="ChEBI" id="CHEBI:18420"/>
    </cofactor>
    <text evidence="1 2">Binds 1 Mg(2+) ion per subunit.</text>
</comment>
<comment type="pathway">
    <text evidence="2">Nucleotide-sugar biosynthesis; UDP-N-acetyl-alpha-D-glucosamine biosynthesis; N-acetyl-alpha-D-glucosamine 1-phosphate from alpha-D-glucosamine 6-phosphate (route II): step 2/2.</text>
</comment>
<comment type="pathway">
    <text evidence="2">Nucleotide-sugar biosynthesis; UDP-N-acetyl-alpha-D-glucosamine biosynthesis; UDP-N-acetyl-alpha-D-glucosamine from N-acetyl-alpha-D-glucosamine 1-phosphate: step 1/1.</text>
</comment>
<comment type="pathway">
    <text evidence="2">Bacterial outer membrane biogenesis; LPS lipid A biosynthesis.</text>
</comment>
<comment type="subunit">
    <text evidence="1 2">Homotrimer.</text>
</comment>
<comment type="subcellular location">
    <subcellularLocation>
        <location evidence="1 2">Cytoplasm</location>
    </subcellularLocation>
</comment>
<comment type="similarity">
    <text evidence="2 4">In the N-terminal section; belongs to the N-acetylglucosamine-1-phosphate uridyltransferase family.</text>
</comment>
<comment type="similarity">
    <text evidence="2 4">In the C-terminal section; belongs to the transferase hexapeptide repeat family.</text>
</comment>
<protein>
    <recommendedName>
        <fullName evidence="2">Bifunctional protein GlmU</fullName>
    </recommendedName>
    <domain>
        <recommendedName>
            <fullName evidence="2">UDP-N-acetylglucosamine pyrophosphorylase</fullName>
            <ecNumber evidence="2">2.7.7.23</ecNumber>
        </recommendedName>
        <alternativeName>
            <fullName evidence="2">N-acetylglucosamine-1-phosphate uridyltransferase</fullName>
        </alternativeName>
    </domain>
    <domain>
        <recommendedName>
            <fullName evidence="2">Glucosamine-1-phosphate N-acetyltransferase</fullName>
            <ecNumber evidence="2">2.3.1.157</ecNumber>
        </recommendedName>
    </domain>
</protein>
<reference key="1">
    <citation type="journal article" date="2007" name="ISME J.">
        <title>Population level functional diversity in a microbial community revealed by comparative genomic and metagenomic analyses.</title>
        <authorList>
            <person name="Bhaya D."/>
            <person name="Grossman A.R."/>
            <person name="Steunou A.-S."/>
            <person name="Khuri N."/>
            <person name="Cohan F.M."/>
            <person name="Hamamura N."/>
            <person name="Melendrez M.C."/>
            <person name="Bateson M.M."/>
            <person name="Ward D.M."/>
            <person name="Heidelberg J.F."/>
        </authorList>
    </citation>
    <scope>NUCLEOTIDE SEQUENCE [LARGE SCALE GENOMIC DNA]</scope>
    <source>
        <strain>JA-3-3Ab</strain>
    </source>
</reference>
<sequence length="621" mass="67917">MAERDLAVAILAAGKGTRMRSQLPKVLHKLGSLSLIERLLRTVLTLKPQRCLVIVGYEQEQVRRALQEYPVEFVEQAQQLGTGHAVQQLLPVLENFQGDLLVVNGDVPLLRAETLQALLERHRQVQPDVTLLSAQVADPYGYGRVFCDAQQRILELVEERDCTPAQRQNRRINSGVYCFHWPALARVLPRLGRNNAQQEYYLTEAVKLLDTAIALDAEDAREIVGINDRRQLAQAYQILQDRLKEAWMEAGVTFVDPDSVSLEETVELAPDVVIEPQTHLRGVCRIGPRTRLGPGSWIESSTIGSDCHILYSVVSHSQIGDRVWVGPYAHVRPHSQIGDGCRIGNFVEIKNAQIGSHTNAAHLAYLGDAKLGSQVNIGAGTIIANYDGQQKHFTEIGDRSKTGANSVLVAPLKIGSDVTIAAGSTIPARYPVPDDCLVIARAYPVVKPGWRPGSAAAGRPQPLPTGSLRVYPLRLLPGQDLKQELERFARQQPLQAGFVLSAVGSLSQATLRLADQTEDYLLSERLEILALSGSLCPDGVHLHLAVADAQGRTWGGHLRPGCLIYTTAEIVLADSLEYRFSRQPDPATGYLELHIEKVAEATPPSPQRADGTGVGIPSCPP</sequence>
<name>GLMU_SYNJA</name>
<gene>
    <name evidence="2" type="primary">glmU</name>
    <name type="ordered locus">CYA_1151</name>
</gene>
<accession>Q2JVA4</accession>